<organism>
    <name type="scientific">Arabidopsis thaliana</name>
    <name type="common">Mouse-ear cress</name>
    <dbReference type="NCBI Taxonomy" id="3702"/>
    <lineage>
        <taxon>Eukaryota</taxon>
        <taxon>Viridiplantae</taxon>
        <taxon>Streptophyta</taxon>
        <taxon>Embryophyta</taxon>
        <taxon>Tracheophyta</taxon>
        <taxon>Spermatophyta</taxon>
        <taxon>Magnoliopsida</taxon>
        <taxon>eudicotyledons</taxon>
        <taxon>Gunneridae</taxon>
        <taxon>Pentapetalae</taxon>
        <taxon>rosids</taxon>
        <taxon>malvids</taxon>
        <taxon>Brassicales</taxon>
        <taxon>Brassicaceae</taxon>
        <taxon>Camelineae</taxon>
        <taxon>Arabidopsis</taxon>
    </lineage>
</organism>
<dbReference type="EC" id="2.5.1.-"/>
<dbReference type="EMBL" id="AB020755">
    <property type="protein sequence ID" value="BAA97346.1"/>
    <property type="status" value="ALT_SEQ"/>
    <property type="molecule type" value="Genomic_DNA"/>
</dbReference>
<dbReference type="EMBL" id="CP002688">
    <property type="protein sequence ID" value="AED97097.1"/>
    <property type="molecule type" value="Genomic_DNA"/>
</dbReference>
<dbReference type="EMBL" id="AY090344">
    <property type="protein sequence ID" value="AAL91250.1"/>
    <property type="molecule type" value="mRNA"/>
</dbReference>
<dbReference type="EMBL" id="BT004518">
    <property type="protein sequence ID" value="AAO42764.1"/>
    <property type="molecule type" value="mRNA"/>
</dbReference>
<dbReference type="SMR" id="Q8RX73"/>
<dbReference type="FunCoup" id="Q8RX73">
    <property type="interactions" value="13"/>
</dbReference>
<dbReference type="STRING" id="3702.Q8RX73"/>
<dbReference type="PaxDb" id="3702-AT5G58780.1"/>
<dbReference type="ProteomicsDB" id="224604"/>
<dbReference type="EnsemblPlants" id="AT5G58780.1">
    <property type="protein sequence ID" value="AT5G58780.1"/>
    <property type="gene ID" value="AT5G58780"/>
</dbReference>
<dbReference type="Gramene" id="AT5G58780.1">
    <property type="protein sequence ID" value="AT5G58780.1"/>
    <property type="gene ID" value="AT5G58780"/>
</dbReference>
<dbReference type="KEGG" id="ath:AT5G58780"/>
<dbReference type="Araport" id="AT5G58780"/>
<dbReference type="TAIR" id="AT5G58780">
    <property type="gene designation" value="CPT5"/>
</dbReference>
<dbReference type="eggNOG" id="KOG1602">
    <property type="taxonomic scope" value="Eukaryota"/>
</dbReference>
<dbReference type="HOGENOM" id="CLU_038505_1_0_1"/>
<dbReference type="InParanoid" id="Q8RX73"/>
<dbReference type="OMA" id="KIEVNCL"/>
<dbReference type="PhylomeDB" id="Q8RX73"/>
<dbReference type="BioCyc" id="ARA:AT5G58780-MONOMER"/>
<dbReference type="UniPathway" id="UPA00378"/>
<dbReference type="PRO" id="PR:Q8RX73"/>
<dbReference type="Proteomes" id="UP000006548">
    <property type="component" value="Chromosome 5"/>
</dbReference>
<dbReference type="ExpressionAtlas" id="Q8RX73">
    <property type="expression patterns" value="baseline and differential"/>
</dbReference>
<dbReference type="GO" id="GO:0005783">
    <property type="term" value="C:endoplasmic reticulum"/>
    <property type="evidence" value="ECO:0000314"/>
    <property type="project" value="TAIR"/>
</dbReference>
<dbReference type="GO" id="GO:0050267">
    <property type="term" value="F:rubber cis-polyprenylcistransferase activity"/>
    <property type="evidence" value="ECO:0000316"/>
    <property type="project" value="TAIR"/>
</dbReference>
<dbReference type="GO" id="GO:0006486">
    <property type="term" value="P:protein glycosylation"/>
    <property type="evidence" value="ECO:0007669"/>
    <property type="project" value="UniProtKB-UniPathway"/>
</dbReference>
<dbReference type="GO" id="GO:0009409">
    <property type="term" value="P:response to cold"/>
    <property type="evidence" value="ECO:0000270"/>
    <property type="project" value="TAIR"/>
</dbReference>
<dbReference type="CDD" id="cd00475">
    <property type="entry name" value="Cis_IPPS"/>
    <property type="match status" value="1"/>
</dbReference>
<dbReference type="FunFam" id="3.40.1180.10:FF:000001">
    <property type="entry name" value="(2E,6E)-farnesyl-diphosphate-specific ditrans,polycis-undecaprenyl-diphosphate synthase"/>
    <property type="match status" value="1"/>
</dbReference>
<dbReference type="Gene3D" id="3.40.1180.10">
    <property type="entry name" value="Decaprenyl diphosphate synthase-like"/>
    <property type="match status" value="1"/>
</dbReference>
<dbReference type="HAMAP" id="MF_01139">
    <property type="entry name" value="ISPT"/>
    <property type="match status" value="1"/>
</dbReference>
<dbReference type="InterPro" id="IPR001441">
    <property type="entry name" value="UPP_synth-like"/>
</dbReference>
<dbReference type="InterPro" id="IPR018520">
    <property type="entry name" value="UPP_synth-like_CS"/>
</dbReference>
<dbReference type="InterPro" id="IPR036424">
    <property type="entry name" value="UPP_synth-like_sf"/>
</dbReference>
<dbReference type="NCBIfam" id="TIGR00055">
    <property type="entry name" value="uppS"/>
    <property type="match status" value="1"/>
</dbReference>
<dbReference type="PANTHER" id="PTHR10291:SF25">
    <property type="entry name" value="ALKYL TRANSFERASE-RELATED"/>
    <property type="match status" value="1"/>
</dbReference>
<dbReference type="PANTHER" id="PTHR10291">
    <property type="entry name" value="DEHYDRODOLICHYL DIPHOSPHATE SYNTHASE FAMILY MEMBER"/>
    <property type="match status" value="1"/>
</dbReference>
<dbReference type="Pfam" id="PF01255">
    <property type="entry name" value="Prenyltransf"/>
    <property type="match status" value="1"/>
</dbReference>
<dbReference type="SUPFAM" id="SSF64005">
    <property type="entry name" value="Undecaprenyl diphosphate synthase"/>
    <property type="match status" value="1"/>
</dbReference>
<dbReference type="PROSITE" id="PS01066">
    <property type="entry name" value="UPP_SYNTHASE"/>
    <property type="match status" value="1"/>
</dbReference>
<comment type="function">
    <text evidence="1">Catalyzes cis-prenyl chain elongation to produce the polyprenyl backbone of dolichol, a glycosyl carrier-lipid required for the biosynthesis of several classes of glycoprotein.</text>
</comment>
<comment type="cofactor">
    <cofactor evidence="1">
        <name>Mg(2+)</name>
        <dbReference type="ChEBI" id="CHEBI:18420"/>
    </cofactor>
</comment>
<comment type="pathway">
    <text>Protein modification; protein glycosylation.</text>
</comment>
<comment type="similarity">
    <text evidence="2">Belongs to the UPP synthase family.</text>
</comment>
<comment type="sequence caution" evidence="2">
    <conflict type="erroneous gene model prediction">
        <sequence resource="EMBL-CDS" id="BAA97346"/>
    </conflict>
</comment>
<keyword id="KW-1185">Reference proteome</keyword>
<keyword id="KW-0808">Transferase</keyword>
<feature type="chain" id="PRO_0000123753" description="Dehydrodolichyl diphosphate synthase 3">
    <location>
        <begin position="1"/>
        <end position="302"/>
    </location>
</feature>
<protein>
    <recommendedName>
        <fullName>Dehydrodolichyl diphosphate synthase 3</fullName>
        <shortName>Dedol-PP synthase 3</shortName>
        <ecNumber>2.5.1.-</ecNumber>
    </recommendedName>
</protein>
<evidence type="ECO:0000250" key="1"/>
<evidence type="ECO:0000305" key="2"/>
<name>DDPS3_ARATH</name>
<sequence length="302" mass="35195">MLSILSSLLSLLFLFIISCFFITSHFWFPLSLPKILGFIKITSSRDDYDNEQRDEGTYVVGVEELQRELMPRHVAVIMDGNRRWAKRAGLLTSQGHEAGAKRLIEFSELCFKLGIHTVSAFAFSTENWGRHKIEVKCLMSLIQHYLKSKIQYFQREETRVSVIGNLTKIPESLLRTVQEIEEATRSYKKKHLILAIDYSGRLDILRACKSIVKKSEKGLIREEDVDEALIERELLTNCTEFPSPDLLIRTSGEQRISNFFLWQLAYTELFFSPVLWPDFDKDKLLEALVSYQRRERRFGCRV</sequence>
<proteinExistence type="evidence at transcript level"/>
<reference key="1">
    <citation type="journal article" date="2000" name="DNA Res.">
        <title>Structural analysis of Arabidopsis thaliana chromosome 5. X. Sequence features of the regions of 3,076,755 bp covered by sixty P1 and TAC clones.</title>
        <authorList>
            <person name="Sato S."/>
            <person name="Nakamura Y."/>
            <person name="Kaneko T."/>
            <person name="Katoh T."/>
            <person name="Asamizu E."/>
            <person name="Kotani H."/>
            <person name="Tabata S."/>
        </authorList>
    </citation>
    <scope>NUCLEOTIDE SEQUENCE [LARGE SCALE GENOMIC DNA]</scope>
    <source>
        <strain>cv. Columbia</strain>
    </source>
</reference>
<reference key="2">
    <citation type="journal article" date="2017" name="Plant J.">
        <title>Araport11: a complete reannotation of the Arabidopsis thaliana reference genome.</title>
        <authorList>
            <person name="Cheng C.Y."/>
            <person name="Krishnakumar V."/>
            <person name="Chan A.P."/>
            <person name="Thibaud-Nissen F."/>
            <person name="Schobel S."/>
            <person name="Town C.D."/>
        </authorList>
    </citation>
    <scope>GENOME REANNOTATION</scope>
    <source>
        <strain>cv. Columbia</strain>
    </source>
</reference>
<reference key="3">
    <citation type="journal article" date="2003" name="Science">
        <title>Empirical analysis of transcriptional activity in the Arabidopsis genome.</title>
        <authorList>
            <person name="Yamada K."/>
            <person name="Lim J."/>
            <person name="Dale J.M."/>
            <person name="Chen H."/>
            <person name="Shinn P."/>
            <person name="Palm C.J."/>
            <person name="Southwick A.M."/>
            <person name="Wu H.C."/>
            <person name="Kim C.J."/>
            <person name="Nguyen M."/>
            <person name="Pham P.K."/>
            <person name="Cheuk R.F."/>
            <person name="Karlin-Newmann G."/>
            <person name="Liu S.X."/>
            <person name="Lam B."/>
            <person name="Sakano H."/>
            <person name="Wu T."/>
            <person name="Yu G."/>
            <person name="Miranda M."/>
            <person name="Quach H.L."/>
            <person name="Tripp M."/>
            <person name="Chang C.H."/>
            <person name="Lee J.M."/>
            <person name="Toriumi M.J."/>
            <person name="Chan M.M."/>
            <person name="Tang C.C."/>
            <person name="Onodera C.S."/>
            <person name="Deng J.M."/>
            <person name="Akiyama K."/>
            <person name="Ansari Y."/>
            <person name="Arakawa T."/>
            <person name="Banh J."/>
            <person name="Banno F."/>
            <person name="Bowser L."/>
            <person name="Brooks S.Y."/>
            <person name="Carninci P."/>
            <person name="Chao Q."/>
            <person name="Choy N."/>
            <person name="Enju A."/>
            <person name="Goldsmith A.D."/>
            <person name="Gurjal M."/>
            <person name="Hansen N.F."/>
            <person name="Hayashizaki Y."/>
            <person name="Johnson-Hopson C."/>
            <person name="Hsuan V.W."/>
            <person name="Iida K."/>
            <person name="Karnes M."/>
            <person name="Khan S."/>
            <person name="Koesema E."/>
            <person name="Ishida J."/>
            <person name="Jiang P.X."/>
            <person name="Jones T."/>
            <person name="Kawai J."/>
            <person name="Kamiya A."/>
            <person name="Meyers C."/>
            <person name="Nakajima M."/>
            <person name="Narusaka M."/>
            <person name="Seki M."/>
            <person name="Sakurai T."/>
            <person name="Satou M."/>
            <person name="Tamse R."/>
            <person name="Vaysberg M."/>
            <person name="Wallender E.K."/>
            <person name="Wong C."/>
            <person name="Yamamura Y."/>
            <person name="Yuan S."/>
            <person name="Shinozaki K."/>
            <person name="Davis R.W."/>
            <person name="Theologis A."/>
            <person name="Ecker J.R."/>
        </authorList>
    </citation>
    <scope>NUCLEOTIDE SEQUENCE [LARGE SCALE MRNA]</scope>
    <source>
        <strain>cv. Columbia</strain>
    </source>
</reference>
<gene>
    <name type="ordered locus">At5g58780</name>
    <name type="ORF">MZN1.22</name>
</gene>
<accession>Q8RX73</accession>
<accession>Q9LUY3</accession>